<protein>
    <recommendedName>
        <fullName evidence="1">Maturase K</fullName>
    </recommendedName>
    <alternativeName>
        <fullName evidence="1">Intron maturase</fullName>
    </alternativeName>
</protein>
<sequence length="519" mass="62268">MDKFRRNGKEDTFRQRRFLYPLLFQENLYAIAYDHYLSRSSSFESMENSSYNDRFSFLTVKRLISRIRQQNGSIVSFGNYNQNKNKLVGHNRNFYSELVLEGLTVVLEVTFSIQSKHYLEGMNEWNSFRSIHSIFPFMEDKIPHSNFLLDIRIPHSTHPEILVRTFRYWIQDAPSLHSLRSVLHEHRNLILSENLDQLILIASKEKTRLSLFLWNYYVYECESLLVPLWKRFSYSRSLSYGAFLERTTFYRKIEHIVIFSHKSIKDLKKRIWFLKDPSIHYVKDRERFLIALRGTYLLVKKWRYHLTNFWQCHFHLRSQPYRISIDELSKNCFSFLGYLFSVQMKTFVVKIKMLDDSFITDPITKEFDPIAPTTLLIGYLAKERFCDISGRPTGRLAWTGLTDDNILHRFDRIWRNILHYYSGSSKKDGLYRMKYILRLPCAKTLACKHKSAIRVVRERFGSELFTKSSPKERELISLSFSKTRSQRERIWHSDILQRNPFCNSWRNKQNLQVETPFDR</sequence>
<organism>
    <name type="scientific">Cycas panzhihuaensis</name>
    <name type="common">Dukou cycad</name>
    <name type="synonym">Cycas baguanheensis</name>
    <dbReference type="NCBI Taxonomy" id="123604"/>
    <lineage>
        <taxon>Eukaryota</taxon>
        <taxon>Viridiplantae</taxon>
        <taxon>Streptophyta</taxon>
        <taxon>Embryophyta</taxon>
        <taxon>Tracheophyta</taxon>
        <taxon>Spermatophyta</taxon>
        <taxon>Cycadidae</taxon>
        <taxon>Cycadales</taxon>
        <taxon>Cycadaceae</taxon>
        <taxon>Cycas</taxon>
    </lineage>
</organism>
<gene>
    <name evidence="1" type="primary">matK</name>
</gene>
<comment type="function">
    <text evidence="1">Usually encoded in the trnK tRNA gene intron. Probably assists in splicing its own and other chloroplast group II introns.</text>
</comment>
<comment type="subcellular location">
    <subcellularLocation>
        <location>Plastid</location>
        <location>Chloroplast</location>
    </subcellularLocation>
</comment>
<comment type="similarity">
    <text evidence="1">Belongs to the intron maturase 2 family. MatK subfamily.</text>
</comment>
<keyword id="KW-0150">Chloroplast</keyword>
<keyword id="KW-0507">mRNA processing</keyword>
<keyword id="KW-0934">Plastid</keyword>
<keyword id="KW-0694">RNA-binding</keyword>
<keyword id="KW-0819">tRNA processing</keyword>
<evidence type="ECO:0000255" key="1">
    <source>
        <dbReference type="HAMAP-Rule" id="MF_01390"/>
    </source>
</evidence>
<accession>Q9MV47</accession>
<reference key="1">
    <citation type="journal article" date="2000" name="Mol. Biol. Evol.">
        <title>Phylogeny and divergence times in Pinaceae: evidence from three genomes.</title>
        <authorList>
            <person name="Wang X.Q."/>
            <person name="Tank D.C."/>
            <person name="Sang T."/>
        </authorList>
    </citation>
    <scope>NUCLEOTIDE SEQUENCE [GENOMIC DNA]</scope>
</reference>
<geneLocation type="chloroplast"/>
<name>MATK_CYCPA</name>
<feature type="chain" id="PRO_0000143350" description="Maturase K">
    <location>
        <begin position="1"/>
        <end position="519"/>
    </location>
</feature>
<proteinExistence type="inferred from homology"/>
<dbReference type="EMBL" id="AF143440">
    <property type="protein sequence ID" value="AAF69195.1"/>
    <property type="molecule type" value="Genomic_DNA"/>
</dbReference>
<dbReference type="GO" id="GO:0009507">
    <property type="term" value="C:chloroplast"/>
    <property type="evidence" value="ECO:0007669"/>
    <property type="project" value="UniProtKB-SubCell"/>
</dbReference>
<dbReference type="GO" id="GO:0003723">
    <property type="term" value="F:RNA binding"/>
    <property type="evidence" value="ECO:0007669"/>
    <property type="project" value="UniProtKB-KW"/>
</dbReference>
<dbReference type="GO" id="GO:0006397">
    <property type="term" value="P:mRNA processing"/>
    <property type="evidence" value="ECO:0007669"/>
    <property type="project" value="UniProtKB-KW"/>
</dbReference>
<dbReference type="GO" id="GO:0008380">
    <property type="term" value="P:RNA splicing"/>
    <property type="evidence" value="ECO:0007669"/>
    <property type="project" value="UniProtKB-UniRule"/>
</dbReference>
<dbReference type="GO" id="GO:0008033">
    <property type="term" value="P:tRNA processing"/>
    <property type="evidence" value="ECO:0007669"/>
    <property type="project" value="UniProtKB-KW"/>
</dbReference>
<dbReference type="HAMAP" id="MF_01390">
    <property type="entry name" value="MatK"/>
    <property type="match status" value="1"/>
</dbReference>
<dbReference type="InterPro" id="IPR024937">
    <property type="entry name" value="Domain_X"/>
</dbReference>
<dbReference type="InterPro" id="IPR002866">
    <property type="entry name" value="Maturase_MatK"/>
</dbReference>
<dbReference type="InterPro" id="IPR024942">
    <property type="entry name" value="Maturase_MatK_N"/>
</dbReference>
<dbReference type="PANTHER" id="PTHR34811">
    <property type="entry name" value="MATURASE K"/>
    <property type="match status" value="1"/>
</dbReference>
<dbReference type="PANTHER" id="PTHR34811:SF1">
    <property type="entry name" value="MATURASE K"/>
    <property type="match status" value="1"/>
</dbReference>
<dbReference type="Pfam" id="PF01348">
    <property type="entry name" value="Intron_maturas2"/>
    <property type="match status" value="1"/>
</dbReference>
<dbReference type="Pfam" id="PF01824">
    <property type="entry name" value="MatK_N"/>
    <property type="match status" value="1"/>
</dbReference>